<name>SYH_PROM0</name>
<feature type="chain" id="PRO_1000016409" description="Histidine--tRNA ligase">
    <location>
        <begin position="1"/>
        <end position="426"/>
    </location>
</feature>
<comment type="catalytic activity">
    <reaction evidence="1">
        <text>tRNA(His) + L-histidine + ATP = L-histidyl-tRNA(His) + AMP + diphosphate + H(+)</text>
        <dbReference type="Rhea" id="RHEA:17313"/>
        <dbReference type="Rhea" id="RHEA-COMP:9665"/>
        <dbReference type="Rhea" id="RHEA-COMP:9689"/>
        <dbReference type="ChEBI" id="CHEBI:15378"/>
        <dbReference type="ChEBI" id="CHEBI:30616"/>
        <dbReference type="ChEBI" id="CHEBI:33019"/>
        <dbReference type="ChEBI" id="CHEBI:57595"/>
        <dbReference type="ChEBI" id="CHEBI:78442"/>
        <dbReference type="ChEBI" id="CHEBI:78527"/>
        <dbReference type="ChEBI" id="CHEBI:456215"/>
        <dbReference type="EC" id="6.1.1.21"/>
    </reaction>
</comment>
<comment type="subunit">
    <text evidence="1">Homodimer.</text>
</comment>
<comment type="subcellular location">
    <subcellularLocation>
        <location evidence="1">Cytoplasm</location>
    </subcellularLocation>
</comment>
<comment type="similarity">
    <text evidence="1">Belongs to the class-II aminoacyl-tRNA synthetase family.</text>
</comment>
<sequence>MNNLKNLRGTVDLFPDQLIKWQNVERILLEQLSRASIKEIRTPILEMTELFIRGIGEGTDVVSKEMYTFLDRGERSCTLRPEGTASVARALIQNGISSNPLQKLWYMGPMFRYERPQAGRQRQFHQLGVEFIGHDSVRSDVEIIALAWDILSKLGIKELNLEINTLGDTNDRSNFQKSFLKWLQANKDSLDLDSQNRISKNPLRILDSKNIQTKKVLENAPRLSNFLSEKSHSRYLELKRQLEVLNIPYVENFNLVRGLDYYTHTAFEITSGALGSQATVCGGGRYDDLIKQMGGPNTPAIGFAIGLERLILLAGKELEIPRNTDIYIINKGLIAESFAMDLSRKLRNYDLLVELDLSGASFSKQFKKANKLKSKSIIVIGDDEAVNGEFIIRLFGQSGNGNKEEVISFENDIKLENWINNNLLLK</sequence>
<reference key="1">
    <citation type="journal article" date="2007" name="PLoS Genet.">
        <title>Patterns and implications of gene gain and loss in the evolution of Prochlorococcus.</title>
        <authorList>
            <person name="Kettler G.C."/>
            <person name="Martiny A.C."/>
            <person name="Huang K."/>
            <person name="Zucker J."/>
            <person name="Coleman M.L."/>
            <person name="Rodrigue S."/>
            <person name="Chen F."/>
            <person name="Lapidus A."/>
            <person name="Ferriera S."/>
            <person name="Johnson J."/>
            <person name="Steglich C."/>
            <person name="Church G.M."/>
            <person name="Richardson P."/>
            <person name="Chisholm S.W."/>
        </authorList>
    </citation>
    <scope>NUCLEOTIDE SEQUENCE [LARGE SCALE GENOMIC DNA]</scope>
    <source>
        <strain>MIT 9301</strain>
    </source>
</reference>
<dbReference type="EC" id="6.1.1.21" evidence="1"/>
<dbReference type="EMBL" id="CP000576">
    <property type="protein sequence ID" value="ABO17272.1"/>
    <property type="molecule type" value="Genomic_DNA"/>
</dbReference>
<dbReference type="RefSeq" id="WP_011862639.1">
    <property type="nucleotide sequence ID" value="NC_009091.1"/>
</dbReference>
<dbReference type="SMR" id="A3PBZ7"/>
<dbReference type="STRING" id="167546.P9301_06491"/>
<dbReference type="KEGG" id="pmg:P9301_06491"/>
<dbReference type="eggNOG" id="COG0124">
    <property type="taxonomic scope" value="Bacteria"/>
</dbReference>
<dbReference type="HOGENOM" id="CLU_025113_1_1_3"/>
<dbReference type="OrthoDB" id="9800814at2"/>
<dbReference type="Proteomes" id="UP000001430">
    <property type="component" value="Chromosome"/>
</dbReference>
<dbReference type="GO" id="GO:0005737">
    <property type="term" value="C:cytoplasm"/>
    <property type="evidence" value="ECO:0007669"/>
    <property type="project" value="UniProtKB-SubCell"/>
</dbReference>
<dbReference type="GO" id="GO:0005524">
    <property type="term" value="F:ATP binding"/>
    <property type="evidence" value="ECO:0007669"/>
    <property type="project" value="UniProtKB-UniRule"/>
</dbReference>
<dbReference type="GO" id="GO:0004821">
    <property type="term" value="F:histidine-tRNA ligase activity"/>
    <property type="evidence" value="ECO:0007669"/>
    <property type="project" value="UniProtKB-UniRule"/>
</dbReference>
<dbReference type="GO" id="GO:0006427">
    <property type="term" value="P:histidyl-tRNA aminoacylation"/>
    <property type="evidence" value="ECO:0007669"/>
    <property type="project" value="UniProtKB-UniRule"/>
</dbReference>
<dbReference type="CDD" id="cd00773">
    <property type="entry name" value="HisRS-like_core"/>
    <property type="match status" value="1"/>
</dbReference>
<dbReference type="Gene3D" id="3.40.50.800">
    <property type="entry name" value="Anticodon-binding domain"/>
    <property type="match status" value="1"/>
</dbReference>
<dbReference type="Gene3D" id="3.30.930.10">
    <property type="entry name" value="Bira Bifunctional Protein, Domain 2"/>
    <property type="match status" value="1"/>
</dbReference>
<dbReference type="HAMAP" id="MF_00127">
    <property type="entry name" value="His_tRNA_synth"/>
    <property type="match status" value="1"/>
</dbReference>
<dbReference type="InterPro" id="IPR006195">
    <property type="entry name" value="aa-tRNA-synth_II"/>
</dbReference>
<dbReference type="InterPro" id="IPR045864">
    <property type="entry name" value="aa-tRNA-synth_II/BPL/LPL"/>
</dbReference>
<dbReference type="InterPro" id="IPR004154">
    <property type="entry name" value="Anticodon-bd"/>
</dbReference>
<dbReference type="InterPro" id="IPR036621">
    <property type="entry name" value="Anticodon-bd_dom_sf"/>
</dbReference>
<dbReference type="InterPro" id="IPR015807">
    <property type="entry name" value="His-tRNA-ligase"/>
</dbReference>
<dbReference type="InterPro" id="IPR041715">
    <property type="entry name" value="HisRS-like_core"/>
</dbReference>
<dbReference type="InterPro" id="IPR004516">
    <property type="entry name" value="HisRS/HisZ"/>
</dbReference>
<dbReference type="NCBIfam" id="TIGR00442">
    <property type="entry name" value="hisS"/>
    <property type="match status" value="1"/>
</dbReference>
<dbReference type="PANTHER" id="PTHR43707:SF1">
    <property type="entry name" value="HISTIDINE--TRNA LIGASE, MITOCHONDRIAL-RELATED"/>
    <property type="match status" value="1"/>
</dbReference>
<dbReference type="PANTHER" id="PTHR43707">
    <property type="entry name" value="HISTIDYL-TRNA SYNTHETASE"/>
    <property type="match status" value="1"/>
</dbReference>
<dbReference type="Pfam" id="PF03129">
    <property type="entry name" value="HGTP_anticodon"/>
    <property type="match status" value="1"/>
</dbReference>
<dbReference type="Pfam" id="PF13393">
    <property type="entry name" value="tRNA-synt_His"/>
    <property type="match status" value="1"/>
</dbReference>
<dbReference type="PIRSF" id="PIRSF001549">
    <property type="entry name" value="His-tRNA_synth"/>
    <property type="match status" value="1"/>
</dbReference>
<dbReference type="SUPFAM" id="SSF52954">
    <property type="entry name" value="Class II aaRS ABD-related"/>
    <property type="match status" value="1"/>
</dbReference>
<dbReference type="SUPFAM" id="SSF55681">
    <property type="entry name" value="Class II aaRS and biotin synthetases"/>
    <property type="match status" value="1"/>
</dbReference>
<dbReference type="PROSITE" id="PS50862">
    <property type="entry name" value="AA_TRNA_LIGASE_II"/>
    <property type="match status" value="1"/>
</dbReference>
<accession>A3PBZ7</accession>
<protein>
    <recommendedName>
        <fullName evidence="1">Histidine--tRNA ligase</fullName>
        <ecNumber evidence="1">6.1.1.21</ecNumber>
    </recommendedName>
    <alternativeName>
        <fullName evidence="1">Histidyl-tRNA synthetase</fullName>
        <shortName evidence="1">HisRS</shortName>
    </alternativeName>
</protein>
<gene>
    <name evidence="1" type="primary">hisS</name>
    <name type="ordered locus">P9301_06491</name>
</gene>
<evidence type="ECO:0000255" key="1">
    <source>
        <dbReference type="HAMAP-Rule" id="MF_00127"/>
    </source>
</evidence>
<organism>
    <name type="scientific">Prochlorococcus marinus (strain MIT 9301)</name>
    <dbReference type="NCBI Taxonomy" id="167546"/>
    <lineage>
        <taxon>Bacteria</taxon>
        <taxon>Bacillati</taxon>
        <taxon>Cyanobacteriota</taxon>
        <taxon>Cyanophyceae</taxon>
        <taxon>Synechococcales</taxon>
        <taxon>Prochlorococcaceae</taxon>
        <taxon>Prochlorococcus</taxon>
    </lineage>
</organism>
<proteinExistence type="inferred from homology"/>
<keyword id="KW-0030">Aminoacyl-tRNA synthetase</keyword>
<keyword id="KW-0067">ATP-binding</keyword>
<keyword id="KW-0963">Cytoplasm</keyword>
<keyword id="KW-0436">Ligase</keyword>
<keyword id="KW-0547">Nucleotide-binding</keyword>
<keyword id="KW-0648">Protein biosynthesis</keyword>
<keyword id="KW-1185">Reference proteome</keyword>